<gene>
    <name evidence="1" type="primary">rplQ</name>
    <name type="ordered locus">AAur_2917</name>
</gene>
<protein>
    <recommendedName>
        <fullName evidence="1">Large ribosomal subunit protein bL17</fullName>
    </recommendedName>
    <alternativeName>
        <fullName evidence="3">50S ribosomal protein L17</fullName>
    </alternativeName>
</protein>
<comment type="subunit">
    <text evidence="1">Part of the 50S ribosomal subunit. Contacts protein L32.</text>
</comment>
<comment type="similarity">
    <text evidence="1">Belongs to the bacterial ribosomal protein bL17 family.</text>
</comment>
<organism>
    <name type="scientific">Paenarthrobacter aurescens (strain TC1)</name>
    <dbReference type="NCBI Taxonomy" id="290340"/>
    <lineage>
        <taxon>Bacteria</taxon>
        <taxon>Bacillati</taxon>
        <taxon>Actinomycetota</taxon>
        <taxon>Actinomycetes</taxon>
        <taxon>Micrococcales</taxon>
        <taxon>Micrococcaceae</taxon>
        <taxon>Paenarthrobacter</taxon>
    </lineage>
</organism>
<keyword id="KW-0687">Ribonucleoprotein</keyword>
<keyword id="KW-0689">Ribosomal protein</keyword>
<name>RL17_PAEAT</name>
<accession>A1R8R4</accession>
<sequence length="189" mass="19815">MPTPTKGPRLGGGPAHERLMLANLAAALFEHKRITTTVTKAKRLKPYAERLVTFAKRGDLASRRRVLGLISDKGVVHELFTDIAGAVANRDGGYTRITKIGNRKGDNAPMAVIELVLEPVSPKQAVVAEATAAASKAAPAAEEEVVETEEAPAVEAEAAESEEAPAAEAEAAEAEAAETEEAPAAEDKK</sequence>
<feature type="chain" id="PRO_1000055765" description="Large ribosomal subunit protein bL17">
    <location>
        <begin position="1"/>
        <end position="189"/>
    </location>
</feature>
<feature type="region of interest" description="Disordered" evidence="2">
    <location>
        <begin position="136"/>
        <end position="189"/>
    </location>
</feature>
<feature type="compositionally biased region" description="Acidic residues" evidence="2">
    <location>
        <begin position="141"/>
        <end position="189"/>
    </location>
</feature>
<proteinExistence type="inferred from homology"/>
<evidence type="ECO:0000255" key="1">
    <source>
        <dbReference type="HAMAP-Rule" id="MF_01368"/>
    </source>
</evidence>
<evidence type="ECO:0000256" key="2">
    <source>
        <dbReference type="SAM" id="MobiDB-lite"/>
    </source>
</evidence>
<evidence type="ECO:0000305" key="3"/>
<reference key="1">
    <citation type="journal article" date="2006" name="PLoS Genet.">
        <title>Secrets of soil survival revealed by the genome sequence of Arthrobacter aurescens TC1.</title>
        <authorList>
            <person name="Mongodin E.F."/>
            <person name="Shapir N."/>
            <person name="Daugherty S.C."/>
            <person name="DeBoy R.T."/>
            <person name="Emerson J.B."/>
            <person name="Shvartzbeyn A."/>
            <person name="Radune D."/>
            <person name="Vamathevan J."/>
            <person name="Riggs F."/>
            <person name="Grinberg V."/>
            <person name="Khouri H.M."/>
            <person name="Wackett L.P."/>
            <person name="Nelson K.E."/>
            <person name="Sadowsky M.J."/>
        </authorList>
    </citation>
    <scope>NUCLEOTIDE SEQUENCE [LARGE SCALE GENOMIC DNA]</scope>
    <source>
        <strain>TC1</strain>
    </source>
</reference>
<dbReference type="EMBL" id="CP000474">
    <property type="protein sequence ID" value="ABM06449.1"/>
    <property type="molecule type" value="Genomic_DNA"/>
</dbReference>
<dbReference type="RefSeq" id="WP_011775566.1">
    <property type="nucleotide sequence ID" value="NC_008711.1"/>
</dbReference>
<dbReference type="SMR" id="A1R8R4"/>
<dbReference type="STRING" id="290340.AAur_2917"/>
<dbReference type="KEGG" id="aau:AAur_2917"/>
<dbReference type="eggNOG" id="COG0203">
    <property type="taxonomic scope" value="Bacteria"/>
</dbReference>
<dbReference type="HOGENOM" id="CLU_074407_0_0_11"/>
<dbReference type="OrthoDB" id="9809073at2"/>
<dbReference type="Proteomes" id="UP000000637">
    <property type="component" value="Chromosome"/>
</dbReference>
<dbReference type="GO" id="GO:0022625">
    <property type="term" value="C:cytosolic large ribosomal subunit"/>
    <property type="evidence" value="ECO:0007669"/>
    <property type="project" value="TreeGrafter"/>
</dbReference>
<dbReference type="GO" id="GO:0003735">
    <property type="term" value="F:structural constituent of ribosome"/>
    <property type="evidence" value="ECO:0007669"/>
    <property type="project" value="InterPro"/>
</dbReference>
<dbReference type="GO" id="GO:0006412">
    <property type="term" value="P:translation"/>
    <property type="evidence" value="ECO:0007669"/>
    <property type="project" value="UniProtKB-UniRule"/>
</dbReference>
<dbReference type="Gene3D" id="3.90.1030.10">
    <property type="entry name" value="Ribosomal protein L17"/>
    <property type="match status" value="1"/>
</dbReference>
<dbReference type="HAMAP" id="MF_01368">
    <property type="entry name" value="Ribosomal_bL17"/>
    <property type="match status" value="1"/>
</dbReference>
<dbReference type="InterPro" id="IPR000456">
    <property type="entry name" value="Ribosomal_bL17"/>
</dbReference>
<dbReference type="InterPro" id="IPR047859">
    <property type="entry name" value="Ribosomal_bL17_CS"/>
</dbReference>
<dbReference type="InterPro" id="IPR036373">
    <property type="entry name" value="Ribosomal_bL17_sf"/>
</dbReference>
<dbReference type="NCBIfam" id="TIGR00059">
    <property type="entry name" value="L17"/>
    <property type="match status" value="1"/>
</dbReference>
<dbReference type="PANTHER" id="PTHR14413:SF16">
    <property type="entry name" value="LARGE RIBOSOMAL SUBUNIT PROTEIN BL17M"/>
    <property type="match status" value="1"/>
</dbReference>
<dbReference type="PANTHER" id="PTHR14413">
    <property type="entry name" value="RIBOSOMAL PROTEIN L17"/>
    <property type="match status" value="1"/>
</dbReference>
<dbReference type="Pfam" id="PF01196">
    <property type="entry name" value="Ribosomal_L17"/>
    <property type="match status" value="1"/>
</dbReference>
<dbReference type="SUPFAM" id="SSF64263">
    <property type="entry name" value="Prokaryotic ribosomal protein L17"/>
    <property type="match status" value="1"/>
</dbReference>
<dbReference type="PROSITE" id="PS01167">
    <property type="entry name" value="RIBOSOMAL_L17"/>
    <property type="match status" value="1"/>
</dbReference>